<dbReference type="EMBL" id="AF525759">
    <property type="protein sequence ID" value="AAQ08963.1"/>
    <property type="molecule type" value="Genomic_DNA"/>
</dbReference>
<dbReference type="EMBL" id="AF525760">
    <property type="protein sequence ID" value="AAQ08966.1"/>
    <property type="molecule type" value="Genomic_DNA"/>
</dbReference>
<dbReference type="EMBL" id="AF525761">
    <property type="protein sequence ID" value="AAQ08969.1"/>
    <property type="molecule type" value="Genomic_DNA"/>
</dbReference>
<dbReference type="RefSeq" id="YP_009573834.1">
    <property type="nucleotide sequence ID" value="NC_041437.1"/>
</dbReference>
<dbReference type="GeneID" id="39696909"/>
<dbReference type="GO" id="GO:0009706">
    <property type="term" value="C:chloroplast inner membrane"/>
    <property type="evidence" value="ECO:0007669"/>
    <property type="project" value="UniProtKB-SubCell"/>
</dbReference>
<dbReference type="GO" id="GO:0015297">
    <property type="term" value="F:antiporter activity"/>
    <property type="evidence" value="ECO:0007669"/>
    <property type="project" value="UniProtKB-KW"/>
</dbReference>
<dbReference type="GO" id="GO:0015078">
    <property type="term" value="F:proton transmembrane transporter activity"/>
    <property type="evidence" value="ECO:0007669"/>
    <property type="project" value="UniProtKB-UniRule"/>
</dbReference>
<dbReference type="GO" id="GO:0006813">
    <property type="term" value="P:potassium ion transport"/>
    <property type="evidence" value="ECO:0007669"/>
    <property type="project" value="UniProtKB-UniRule"/>
</dbReference>
<dbReference type="HAMAP" id="MF_01308">
    <property type="entry name" value="CemA_PxcA"/>
    <property type="match status" value="1"/>
</dbReference>
<dbReference type="InterPro" id="IPR004282">
    <property type="entry name" value="CemA"/>
</dbReference>
<dbReference type="PANTHER" id="PTHR33650:SF2">
    <property type="entry name" value="CHLOROPLAST ENVELOPE MEMBRANE PROTEIN"/>
    <property type="match status" value="1"/>
</dbReference>
<dbReference type="PANTHER" id="PTHR33650">
    <property type="entry name" value="CHLOROPLAST ENVELOPE MEMBRANE PROTEIN-RELATED"/>
    <property type="match status" value="1"/>
</dbReference>
<dbReference type="Pfam" id="PF03040">
    <property type="entry name" value="CemA"/>
    <property type="match status" value="1"/>
</dbReference>
<gene>
    <name evidence="1" type="primary">cemA</name>
</gene>
<organism>
    <name type="scientific">Fagus sylvatica</name>
    <name type="common">Beechnut</name>
    <dbReference type="NCBI Taxonomy" id="28930"/>
    <lineage>
        <taxon>Eukaryota</taxon>
        <taxon>Viridiplantae</taxon>
        <taxon>Streptophyta</taxon>
        <taxon>Embryophyta</taxon>
        <taxon>Tracheophyta</taxon>
        <taxon>Spermatophyta</taxon>
        <taxon>Magnoliopsida</taxon>
        <taxon>eudicotyledons</taxon>
        <taxon>Gunneridae</taxon>
        <taxon>Pentapetalae</taxon>
        <taxon>rosids</taxon>
        <taxon>fabids</taxon>
        <taxon>Fagales</taxon>
        <taxon>Fagaceae</taxon>
        <taxon>Fagus</taxon>
    </lineage>
</organism>
<evidence type="ECO:0000255" key="1">
    <source>
        <dbReference type="HAMAP-Rule" id="MF_01308"/>
    </source>
</evidence>
<evidence type="ECO:0000305" key="2"/>
<name>CEMA_FAGSY</name>
<keyword id="KW-0050">Antiport</keyword>
<keyword id="KW-0150">Chloroplast</keyword>
<keyword id="KW-0375">Hydrogen ion transport</keyword>
<keyword id="KW-0406">Ion transport</keyword>
<keyword id="KW-0472">Membrane</keyword>
<keyword id="KW-0934">Plastid</keyword>
<keyword id="KW-1001">Plastid inner membrane</keyword>
<keyword id="KW-0630">Potassium</keyword>
<keyword id="KW-0633">Potassium transport</keyword>
<keyword id="KW-0812">Transmembrane</keyword>
<keyword id="KW-1133">Transmembrane helix</keyword>
<keyword id="KW-0813">Transport</keyword>
<reference key="1">
    <citation type="journal article" date="2004" name="Theor. Appl. Genet.">
        <title>Geographic distribution of chloroplast variation in Italian populations of beech (Fagus sylvatica L.).</title>
        <authorList>
            <person name="Vettori C."/>
            <person name="Vendramin G.G."/>
            <person name="Anzidei M."/>
            <person name="Pastorelli R."/>
            <person name="Paffetti D."/>
            <person name="Giannini R."/>
        </authorList>
    </citation>
    <scope>NUCLEOTIDE SEQUENCE [GENOMIC DNA]</scope>
</reference>
<proteinExistence type="inferred from homology"/>
<protein>
    <recommendedName>
        <fullName evidence="1">Potassium/proton antiporter CemA</fullName>
    </recommendedName>
    <alternativeName>
        <fullName evidence="1">Chloroplast envelope membrane protein A</fullName>
        <shortName evidence="1">CemA</shortName>
    </alternativeName>
</protein>
<comment type="function">
    <text evidence="1">Contributes to K(+)/H(+) antiport activity by supporting proton efflux to control proton extrusion and homeostasis in chloroplasts in a light-dependent manner to modulate photosynthesis. Prevents excessive induction of non-photochemical quenching (NPQ) under continuous-light conditions. Indirectly promotes efficient inorganic carbon uptake into chloroplasts.</text>
</comment>
<comment type="catalytic activity">
    <reaction evidence="1">
        <text>K(+)(in) + H(+)(out) = K(+)(out) + H(+)(in)</text>
        <dbReference type="Rhea" id="RHEA:29467"/>
        <dbReference type="ChEBI" id="CHEBI:15378"/>
        <dbReference type="ChEBI" id="CHEBI:29103"/>
    </reaction>
</comment>
<comment type="subcellular location">
    <subcellularLocation>
        <location evidence="1">Plastid</location>
        <location evidence="1">Chloroplast inner membrane</location>
        <topology evidence="1">Multi-pass membrane protein</topology>
    </subcellularLocation>
</comment>
<comment type="similarity">
    <text evidence="1 2">Belongs to the CemA family.</text>
</comment>
<geneLocation type="chloroplast"/>
<accession>Q71E53</accession>
<feature type="chain" id="PRO_0000216641" description="Potassium/proton antiporter CemA">
    <location>
        <begin position="1"/>
        <end position="229"/>
    </location>
</feature>
<feature type="transmembrane region" description="Helical" evidence="1">
    <location>
        <begin position="7"/>
        <end position="27"/>
    </location>
</feature>
<feature type="transmembrane region" description="Helical" evidence="1">
    <location>
        <begin position="114"/>
        <end position="134"/>
    </location>
</feature>
<feature type="transmembrane region" description="Helical" evidence="1">
    <location>
        <begin position="154"/>
        <end position="174"/>
    </location>
</feature>
<feature type="transmembrane region" description="Helical" evidence="1">
    <location>
        <begin position="189"/>
        <end position="209"/>
    </location>
</feature>
<sequence length="229" mass="26800">MAKKKALIPLLYLASIVFLPWWISLSFTKSLESWVTDWWDTGQSEILLNAIQEKSILKKFIELEELFLLDEMIKEYPETHLEKLRIGIYNETIQLIKMHNEDCIYTILHFSTNIICFVILSSYSILGNEELVILNSWVQEFLYNLSDTIKAFSILLLTDLCIGFHSPHGWELMIGSVYKDFGFAHYEQIISGLVSTFPVILDTILKYWIFRYLNRVSPSLVVIYHSMND</sequence>